<comment type="tissue specificity">
    <text evidence="2">Expressed in ovary, specifically in oocytes. Detected in follicles with two layers of granulosa cells, and are present in early as well as large antral follicles.</text>
</comment>
<comment type="similarity">
    <text evidence="4">Belongs to the PRAME family.</text>
</comment>
<dbReference type="EMBL" id="AY573562">
    <property type="protein sequence ID" value="AAS99140.1"/>
    <property type="molecule type" value="mRNA"/>
</dbReference>
<dbReference type="EMBL" id="AL627131">
    <property type="status" value="NOT_ANNOTATED_CDS"/>
    <property type="molecule type" value="Genomic_DNA"/>
</dbReference>
<dbReference type="EMBL" id="BC052839">
    <property type="protein sequence ID" value="AAH52839.1"/>
    <property type="molecule type" value="mRNA"/>
</dbReference>
<dbReference type="CCDS" id="CCDS18901.1"/>
<dbReference type="RefSeq" id="NP_941063.1">
    <property type="nucleotide sequence ID" value="NM_198661.3"/>
</dbReference>
<dbReference type="SMR" id="Q7TPX8"/>
<dbReference type="FunCoup" id="Q7TPX8">
    <property type="interactions" value="18"/>
</dbReference>
<dbReference type="STRING" id="10090.ENSMUSP00000079267"/>
<dbReference type="GlyGen" id="Q7TPX8">
    <property type="glycosylation" value="1 site, 1 O-linked glycan (1 site)"/>
</dbReference>
<dbReference type="iPTMnet" id="Q7TPX8"/>
<dbReference type="PaxDb" id="10090-ENSMUSP00000079267"/>
<dbReference type="Ensembl" id="ENSMUST00000080405.2">
    <property type="protein sequence ID" value="ENSMUSP00000079267.2"/>
    <property type="gene ID" value="ENSMUSG00000066030.8"/>
</dbReference>
<dbReference type="Ensembl" id="ENSMUST00000249104.1">
    <property type="protein sequence ID" value="ENSMUSP00000159582.1"/>
    <property type="gene ID" value="ENSMUSG00000066030.8"/>
</dbReference>
<dbReference type="GeneID" id="381570"/>
<dbReference type="KEGG" id="mmu:381570"/>
<dbReference type="UCSC" id="uc008vqy.2">
    <property type="organism name" value="mouse"/>
</dbReference>
<dbReference type="AGR" id="MGI:2684035"/>
<dbReference type="CTD" id="381570"/>
<dbReference type="MGI" id="MGI:2684035">
    <property type="gene designation" value="Oog2"/>
</dbReference>
<dbReference type="VEuPathDB" id="HostDB:ENSMUSG00000066030"/>
<dbReference type="eggNOG" id="ENOG502QWSJ">
    <property type="taxonomic scope" value="Eukaryota"/>
</dbReference>
<dbReference type="GeneTree" id="ENSGT01030000234531"/>
<dbReference type="HOGENOM" id="CLU_039635_2_1_1"/>
<dbReference type="InParanoid" id="Q7TPX8"/>
<dbReference type="PhylomeDB" id="Q7TPX8"/>
<dbReference type="TreeFam" id="TF332708"/>
<dbReference type="BioGRID-ORCS" id="381570">
    <property type="hits" value="1 hit in 43 CRISPR screens"/>
</dbReference>
<dbReference type="ChiTaRS" id="Oog2">
    <property type="organism name" value="mouse"/>
</dbReference>
<dbReference type="PRO" id="PR:Q7TPX8"/>
<dbReference type="Proteomes" id="UP000000589">
    <property type="component" value="Chromosome 4"/>
</dbReference>
<dbReference type="RNAct" id="Q7TPX8">
    <property type="molecule type" value="protein"/>
</dbReference>
<dbReference type="Bgee" id="ENSMUSG00000066030">
    <property type="expression patterns" value="Expressed in animal zygote and 7 other cell types or tissues"/>
</dbReference>
<dbReference type="ExpressionAtlas" id="Q7TPX8">
    <property type="expression patterns" value="baseline and differential"/>
</dbReference>
<dbReference type="GO" id="GO:0043066">
    <property type="term" value="P:negative regulation of apoptotic process"/>
    <property type="evidence" value="ECO:0007669"/>
    <property type="project" value="InterPro"/>
</dbReference>
<dbReference type="GO" id="GO:0045596">
    <property type="term" value="P:negative regulation of cell differentiation"/>
    <property type="evidence" value="ECO:0007669"/>
    <property type="project" value="InterPro"/>
</dbReference>
<dbReference type="GO" id="GO:0045892">
    <property type="term" value="P:negative regulation of DNA-templated transcription"/>
    <property type="evidence" value="ECO:0007669"/>
    <property type="project" value="InterPro"/>
</dbReference>
<dbReference type="GO" id="GO:0008284">
    <property type="term" value="P:positive regulation of cell population proliferation"/>
    <property type="evidence" value="ECO:0007669"/>
    <property type="project" value="InterPro"/>
</dbReference>
<dbReference type="FunFam" id="3.80.10.10:FF:000475">
    <property type="entry name" value="Predicted gene 10436"/>
    <property type="match status" value="1"/>
</dbReference>
<dbReference type="Gene3D" id="3.80.10.10">
    <property type="entry name" value="Ribonuclease Inhibitor"/>
    <property type="match status" value="1"/>
</dbReference>
<dbReference type="InterPro" id="IPR032675">
    <property type="entry name" value="LRR_dom_sf"/>
</dbReference>
<dbReference type="InterPro" id="IPR026271">
    <property type="entry name" value="PRAME"/>
</dbReference>
<dbReference type="InterPro" id="IPR050694">
    <property type="entry name" value="PRAME_domain"/>
</dbReference>
<dbReference type="PANTHER" id="PTHR14224:SF22">
    <property type="entry name" value="OOG4 PROTEIN-RELATED"/>
    <property type="match status" value="1"/>
</dbReference>
<dbReference type="PANTHER" id="PTHR14224">
    <property type="entry name" value="SIMILAR TO PREFERENTIALLY EXPRESSED ANTIGEN IN MELANOMA-LIKE 3"/>
    <property type="match status" value="1"/>
</dbReference>
<dbReference type="PIRSF" id="PIRSF038286">
    <property type="entry name" value="PRAME"/>
    <property type="match status" value="1"/>
</dbReference>
<dbReference type="SUPFAM" id="SSF52047">
    <property type="entry name" value="RNI-like"/>
    <property type="match status" value="1"/>
</dbReference>
<gene>
    <name evidence="5" type="primary">Oog2</name>
</gene>
<sequence>MNFYSPPTLMELARQCLLRDEYLAISALKDLPNMMFPVMFKEAFIDGHTKILTAMIPVWPFPYLSVGTMLKNLNLDTLKAVLEEIDILISKPVFSSRCKLREITLSHDLVVVWAGSHEVEGLPEFMEQEKPVENSPGYGTKNKLKVTTELQFMEGHLDECSTYLLQWAYQREDSIHLHCRKLKIYGLTKAAVIEMFKIVHAEYIEDLELSCLCLEYLDFLNPYLKQMSNLLSLTLDEIIYTLNIDDYRNLNEEKVITVISHLPTFHHLQELYVHGVIFIECLRCLKKPLEVLSFTDCDLSQSDLDYLPYCLNIFELRSLHLTDVRLSNLLLEPLGFLLERVRHTLKSLQLMSCEMGETHFNALLPALSQCYQLTVVNFYGNELSLLFLKKLLHHTAKLSQLADELYPAPQECYDNRDVVLSHRLENFCSELLDILRAIREPKKVTFGTIKCSKCGGSYVYDLETQCCFFEKNPPWA</sequence>
<organism>
    <name type="scientific">Mus musculus</name>
    <name type="common">Mouse</name>
    <dbReference type="NCBI Taxonomy" id="10090"/>
    <lineage>
        <taxon>Eukaryota</taxon>
        <taxon>Metazoa</taxon>
        <taxon>Chordata</taxon>
        <taxon>Craniata</taxon>
        <taxon>Vertebrata</taxon>
        <taxon>Euteleostomi</taxon>
        <taxon>Mammalia</taxon>
        <taxon>Eutheria</taxon>
        <taxon>Euarchontoglires</taxon>
        <taxon>Glires</taxon>
        <taxon>Rodentia</taxon>
        <taxon>Myomorpha</taxon>
        <taxon>Muroidea</taxon>
        <taxon>Muridae</taxon>
        <taxon>Murinae</taxon>
        <taxon>Mus</taxon>
        <taxon>Mus</taxon>
    </lineage>
</organism>
<evidence type="ECO:0000250" key="1">
    <source>
        <dbReference type="UniProtKB" id="Q3UWY1"/>
    </source>
</evidence>
<evidence type="ECO:0000269" key="2">
    <source>
    </source>
</evidence>
<evidence type="ECO:0000303" key="3">
    <source>
    </source>
</evidence>
<evidence type="ECO:0000305" key="4"/>
<evidence type="ECO:0000312" key="5">
    <source>
        <dbReference type="MGI" id="MGI:2684035"/>
    </source>
</evidence>
<name>OOG2_MOUSE</name>
<keyword id="KW-0433">Leucine-rich repeat</keyword>
<keyword id="KW-1185">Reference proteome</keyword>
<keyword id="KW-0677">Repeat</keyword>
<reference key="1">
    <citation type="journal article" date="2003" name="FEBS Lett.">
        <title>Identification of a new expanding family of genes characterized by atypical LRR domains. Localization of a cluster preferentially expressed in oocyte.</title>
        <authorList>
            <person name="Dade S."/>
            <person name="Callebaut I."/>
            <person name="Mermillod P."/>
            <person name="Monget P."/>
        </authorList>
    </citation>
    <scope>NUCLEOTIDE SEQUENCE [MRNA]</scope>
    <scope>TISSUE SPECIFICITY</scope>
    <source>
        <strain>C57BL/6 X 129</strain>
    </source>
</reference>
<reference key="2">
    <citation type="journal article" date="2004" name="Genome Res.">
        <title>The status, quality, and expansion of the NIH full-length cDNA project: the Mammalian Gene Collection (MGC).</title>
        <authorList>
            <consortium name="The MGC Project Team"/>
        </authorList>
    </citation>
    <scope>NUCLEOTIDE SEQUENCE [LARGE SCALE MRNA]</scope>
    <source>
        <strain>C57BL/6J</strain>
        <tissue>Egg</tissue>
    </source>
</reference>
<reference key="3">
    <citation type="journal article" date="2009" name="PLoS Biol.">
        <title>Lineage-specific biology revealed by a finished genome assembly of the mouse.</title>
        <authorList>
            <person name="Church D.M."/>
            <person name="Goodstadt L."/>
            <person name="Hillier L.W."/>
            <person name="Zody M.C."/>
            <person name="Goldstein S."/>
            <person name="She X."/>
            <person name="Bult C.J."/>
            <person name="Agarwala R."/>
            <person name="Cherry J.L."/>
            <person name="DiCuccio M."/>
            <person name="Hlavina W."/>
            <person name="Kapustin Y."/>
            <person name="Meric P."/>
            <person name="Maglott D."/>
            <person name="Birtle Z."/>
            <person name="Marques A.C."/>
            <person name="Graves T."/>
            <person name="Zhou S."/>
            <person name="Teague B."/>
            <person name="Potamousis K."/>
            <person name="Churas C."/>
            <person name="Place M."/>
            <person name="Herschleb J."/>
            <person name="Runnheim R."/>
            <person name="Forrest D."/>
            <person name="Amos-Landgraf J."/>
            <person name="Schwartz D.C."/>
            <person name="Cheng Z."/>
            <person name="Lindblad-Toh K."/>
            <person name="Eichler E.E."/>
            <person name="Ponting C.P."/>
        </authorList>
    </citation>
    <scope>NUCLEOTIDE SEQUENCE [LARGE SCALE GENOMIC DNA]</scope>
    <source>
        <strain>C57BL/6J</strain>
    </source>
</reference>
<proteinExistence type="evidence at transcript level"/>
<protein>
    <recommendedName>
        <fullName evidence="3">Oogenesin-2</fullName>
    </recommendedName>
</protein>
<feature type="chain" id="PRO_0000440972" description="Oogenesin-2">
    <location>
        <begin position="1"/>
        <end position="476"/>
    </location>
</feature>
<feature type="repeat" description="LRR 1; degenerate" evidence="1">
    <location>
        <begin position="97"/>
        <end position="121"/>
    </location>
</feature>
<feature type="repeat" description="LRR 2; degenerate" evidence="1">
    <location>
        <begin position="176"/>
        <end position="200"/>
    </location>
</feature>
<feature type="repeat" description="LRR 3; degenerate" evidence="1">
    <location>
        <begin position="201"/>
        <end position="226"/>
    </location>
</feature>
<feature type="repeat" description="LRR 4; degenerate" evidence="1">
    <location>
        <begin position="227"/>
        <end position="264"/>
    </location>
</feature>
<feature type="repeat" description="LRR 5" evidence="1">
    <location>
        <begin position="265"/>
        <end position="285"/>
    </location>
</feature>
<feature type="repeat" description="LRR 6" evidence="1">
    <location>
        <begin position="286"/>
        <end position="317"/>
    </location>
</feature>
<feature type="repeat" description="LRR 7" evidence="1">
    <location>
        <begin position="342"/>
        <end position="369"/>
    </location>
</feature>
<feature type="repeat" description="LRR 8" evidence="1">
    <location>
        <begin position="370"/>
        <end position="394"/>
    </location>
</feature>
<accession>Q7TPX8</accession>